<keyword id="KW-0150">Chloroplast</keyword>
<keyword id="KW-0249">Electron transport</keyword>
<keyword id="KW-0472">Membrane</keyword>
<keyword id="KW-0602">Photosynthesis</keyword>
<keyword id="KW-0934">Plastid</keyword>
<keyword id="KW-0793">Thylakoid</keyword>
<keyword id="KW-0812">Transmembrane</keyword>
<keyword id="KW-1133">Transmembrane helix</keyword>
<keyword id="KW-0813">Transport</keyword>
<comment type="function">
    <text evidence="1">Component of the cytochrome b6-f complex, which mediates electron transfer between photosystem II (PSII) and photosystem I (PSI), cyclic electron flow around PSI, and state transitions. PetG is required for either the stability or assembly of the cytochrome b6-f complex.</text>
</comment>
<comment type="subunit">
    <text evidence="1">The 4 large subunits of the cytochrome b6-f complex are cytochrome b6, subunit IV (17 kDa polypeptide, PetD), cytochrome f and the Rieske protein, while the 4 small subunits are PetG, PetL, PetM and PetN. The complex functions as a dimer.</text>
</comment>
<comment type="subcellular location">
    <subcellularLocation>
        <location evidence="1">Plastid</location>
        <location evidence="1">Chloroplast thylakoid membrane</location>
        <topology evidence="1">Single-pass membrane protein</topology>
    </subcellularLocation>
</comment>
<comment type="similarity">
    <text evidence="1">Belongs to the PetG family.</text>
</comment>
<reference key="1">
    <citation type="submission" date="2007-03" db="EMBL/GenBank/DDBJ databases">
        <title>Sequence analysis of Arabidopsis pumila JS2 chloroplast DNA.</title>
        <authorList>
            <person name="Hosouchi T."/>
            <person name="Tsuruoka H."/>
            <person name="Kotani H."/>
        </authorList>
    </citation>
    <scope>NUCLEOTIDE SEQUENCE [LARGE SCALE GENOMIC DNA]</scope>
</reference>
<proteinExistence type="inferred from homology"/>
<evidence type="ECO:0000255" key="1">
    <source>
        <dbReference type="HAMAP-Rule" id="MF_00432"/>
    </source>
</evidence>
<geneLocation type="chloroplast"/>
<protein>
    <recommendedName>
        <fullName evidence="1">Cytochrome b6-f complex subunit 5</fullName>
    </recommendedName>
    <alternativeName>
        <fullName evidence="1">Cytochrome b6-f complex subunit PetG</fullName>
    </alternativeName>
    <alternativeName>
        <fullName evidence="1">Cytochrome b6-f complex subunit V</fullName>
    </alternativeName>
</protein>
<feature type="chain" id="PRO_0000355406" description="Cytochrome b6-f complex subunit 5">
    <location>
        <begin position="1"/>
        <end position="37"/>
    </location>
</feature>
<feature type="transmembrane region" description="Helical" evidence="1">
    <location>
        <begin position="5"/>
        <end position="25"/>
    </location>
</feature>
<name>PETG_OLIPU</name>
<organism>
    <name type="scientific">Olimarabidopsis pumila</name>
    <name type="common">Dwarf rocket</name>
    <name type="synonym">Arabidopsis griffithiana</name>
    <dbReference type="NCBI Taxonomy" id="74718"/>
    <lineage>
        <taxon>Eukaryota</taxon>
        <taxon>Viridiplantae</taxon>
        <taxon>Streptophyta</taxon>
        <taxon>Embryophyta</taxon>
        <taxon>Tracheophyta</taxon>
        <taxon>Spermatophyta</taxon>
        <taxon>Magnoliopsida</taxon>
        <taxon>eudicotyledons</taxon>
        <taxon>Gunneridae</taxon>
        <taxon>Pentapetalae</taxon>
        <taxon>rosids</taxon>
        <taxon>malvids</taxon>
        <taxon>Brassicales</taxon>
        <taxon>Brassicaceae</taxon>
        <taxon>Alyssopsideae</taxon>
        <taxon>Olimarabidopsis</taxon>
    </lineage>
</organism>
<accession>A4QJV0</accession>
<dbReference type="EMBL" id="AP009368">
    <property type="protein sequence ID" value="BAF49958.1"/>
    <property type="molecule type" value="Genomic_DNA"/>
</dbReference>
<dbReference type="RefSeq" id="YP_001123134.1">
    <property type="nucleotide sequence ID" value="NC_009267.1"/>
</dbReference>
<dbReference type="SMR" id="A4QJV0"/>
<dbReference type="GeneID" id="4962403"/>
<dbReference type="GO" id="GO:0009535">
    <property type="term" value="C:chloroplast thylakoid membrane"/>
    <property type="evidence" value="ECO:0007669"/>
    <property type="project" value="UniProtKB-SubCell"/>
</dbReference>
<dbReference type="GO" id="GO:0009512">
    <property type="term" value="C:cytochrome b6f complex"/>
    <property type="evidence" value="ECO:0007669"/>
    <property type="project" value="InterPro"/>
</dbReference>
<dbReference type="GO" id="GO:0045158">
    <property type="term" value="F:electron transporter, transferring electrons within cytochrome b6/f complex of photosystem II activity"/>
    <property type="evidence" value="ECO:0007669"/>
    <property type="project" value="UniProtKB-UniRule"/>
</dbReference>
<dbReference type="GO" id="GO:0017004">
    <property type="term" value="P:cytochrome complex assembly"/>
    <property type="evidence" value="ECO:0007669"/>
    <property type="project" value="UniProtKB-UniRule"/>
</dbReference>
<dbReference type="GO" id="GO:0015979">
    <property type="term" value="P:photosynthesis"/>
    <property type="evidence" value="ECO:0007669"/>
    <property type="project" value="UniProtKB-KW"/>
</dbReference>
<dbReference type="HAMAP" id="MF_00432">
    <property type="entry name" value="Cytb6_f_PetG"/>
    <property type="match status" value="1"/>
</dbReference>
<dbReference type="InterPro" id="IPR003683">
    <property type="entry name" value="Cyt_6/f_cplx_su5"/>
</dbReference>
<dbReference type="InterPro" id="IPR036099">
    <property type="entry name" value="Cyt_6/f_cplx_su5_sf"/>
</dbReference>
<dbReference type="NCBIfam" id="NF001907">
    <property type="entry name" value="PRK00665.1"/>
    <property type="match status" value="1"/>
</dbReference>
<dbReference type="Pfam" id="PF02529">
    <property type="entry name" value="PetG"/>
    <property type="match status" value="1"/>
</dbReference>
<dbReference type="PIRSF" id="PIRSF000034">
    <property type="entry name" value="Cyt_b6-f_V"/>
    <property type="match status" value="1"/>
</dbReference>
<dbReference type="SUPFAM" id="SSF103446">
    <property type="entry name" value="PetG subunit of the cytochrome b6f complex"/>
    <property type="match status" value="1"/>
</dbReference>
<sequence>MIEVFLFGIVLGLIPITLAGLFVTAYLQYRRGDQLDF</sequence>
<gene>
    <name evidence="1" type="primary">petG</name>
</gene>